<feature type="chain" id="PRO_1000052613" description="Large ribosomal subunit protein uL22">
    <location>
        <begin position="1"/>
        <end position="114"/>
    </location>
</feature>
<reference key="1">
    <citation type="journal article" date="2006" name="Proc. Natl. Acad. Sci. U.S.A.">
        <title>Evolution of sensory complexity recorded in a myxobacterial genome.</title>
        <authorList>
            <person name="Goldman B.S."/>
            <person name="Nierman W.C."/>
            <person name="Kaiser D."/>
            <person name="Slater S.C."/>
            <person name="Durkin A.S."/>
            <person name="Eisen J.A."/>
            <person name="Ronning C.M."/>
            <person name="Barbazuk W.B."/>
            <person name="Blanchard M."/>
            <person name="Field C."/>
            <person name="Halling C."/>
            <person name="Hinkle G."/>
            <person name="Iartchuk O."/>
            <person name="Kim H.S."/>
            <person name="Mackenzie C."/>
            <person name="Madupu R."/>
            <person name="Miller N."/>
            <person name="Shvartsbeyn A."/>
            <person name="Sullivan S.A."/>
            <person name="Vaudin M."/>
            <person name="Wiegand R."/>
            <person name="Kaplan H.B."/>
        </authorList>
    </citation>
    <scope>NUCLEOTIDE SEQUENCE [LARGE SCALE GENOMIC DNA]</scope>
    <source>
        <strain>DK1622</strain>
    </source>
</reference>
<evidence type="ECO:0000255" key="1">
    <source>
        <dbReference type="HAMAP-Rule" id="MF_01331"/>
    </source>
</evidence>
<evidence type="ECO:0000305" key="2"/>
<sequence>MESTAHLRFLRMSPRKISTVAELIRGKPVEAALNILKFTKRAAAKPVEKLIKSAVANATDKSKGQVDVDTLYVKTISVDQGPTQRRFMPRAMGRATPIKKKTAHVHVVLAEAKK</sequence>
<dbReference type="EMBL" id="CP000113">
    <property type="protein sequence ID" value="ABF89495.1"/>
    <property type="molecule type" value="Genomic_DNA"/>
</dbReference>
<dbReference type="RefSeq" id="WP_002633603.1">
    <property type="nucleotide sequence ID" value="NC_008095.1"/>
</dbReference>
<dbReference type="SMR" id="Q1D770"/>
<dbReference type="STRING" id="246197.MXAN_3304"/>
<dbReference type="EnsemblBacteria" id="ABF89495">
    <property type="protein sequence ID" value="ABF89495"/>
    <property type="gene ID" value="MXAN_3304"/>
</dbReference>
<dbReference type="GeneID" id="41360657"/>
<dbReference type="KEGG" id="mxa:MXAN_3304"/>
<dbReference type="eggNOG" id="COG0091">
    <property type="taxonomic scope" value="Bacteria"/>
</dbReference>
<dbReference type="HOGENOM" id="CLU_083987_3_3_7"/>
<dbReference type="OrthoDB" id="9805969at2"/>
<dbReference type="Proteomes" id="UP000002402">
    <property type="component" value="Chromosome"/>
</dbReference>
<dbReference type="GO" id="GO:0022625">
    <property type="term" value="C:cytosolic large ribosomal subunit"/>
    <property type="evidence" value="ECO:0007669"/>
    <property type="project" value="TreeGrafter"/>
</dbReference>
<dbReference type="GO" id="GO:0019843">
    <property type="term" value="F:rRNA binding"/>
    <property type="evidence" value="ECO:0007669"/>
    <property type="project" value="UniProtKB-UniRule"/>
</dbReference>
<dbReference type="GO" id="GO:0003735">
    <property type="term" value="F:structural constituent of ribosome"/>
    <property type="evidence" value="ECO:0007669"/>
    <property type="project" value="InterPro"/>
</dbReference>
<dbReference type="GO" id="GO:0006412">
    <property type="term" value="P:translation"/>
    <property type="evidence" value="ECO:0007669"/>
    <property type="project" value="UniProtKB-UniRule"/>
</dbReference>
<dbReference type="CDD" id="cd00336">
    <property type="entry name" value="Ribosomal_L22"/>
    <property type="match status" value="1"/>
</dbReference>
<dbReference type="Gene3D" id="3.90.470.10">
    <property type="entry name" value="Ribosomal protein L22/L17"/>
    <property type="match status" value="1"/>
</dbReference>
<dbReference type="HAMAP" id="MF_01331_B">
    <property type="entry name" value="Ribosomal_uL22_B"/>
    <property type="match status" value="1"/>
</dbReference>
<dbReference type="InterPro" id="IPR001063">
    <property type="entry name" value="Ribosomal_uL22"/>
</dbReference>
<dbReference type="InterPro" id="IPR005727">
    <property type="entry name" value="Ribosomal_uL22_bac/chlpt-type"/>
</dbReference>
<dbReference type="InterPro" id="IPR047867">
    <property type="entry name" value="Ribosomal_uL22_bac/org-type"/>
</dbReference>
<dbReference type="InterPro" id="IPR018260">
    <property type="entry name" value="Ribosomal_uL22_CS"/>
</dbReference>
<dbReference type="InterPro" id="IPR036394">
    <property type="entry name" value="Ribosomal_uL22_sf"/>
</dbReference>
<dbReference type="NCBIfam" id="TIGR01044">
    <property type="entry name" value="rplV_bact"/>
    <property type="match status" value="1"/>
</dbReference>
<dbReference type="PANTHER" id="PTHR13501">
    <property type="entry name" value="CHLOROPLAST 50S RIBOSOMAL PROTEIN L22-RELATED"/>
    <property type="match status" value="1"/>
</dbReference>
<dbReference type="PANTHER" id="PTHR13501:SF8">
    <property type="entry name" value="LARGE RIBOSOMAL SUBUNIT PROTEIN UL22M"/>
    <property type="match status" value="1"/>
</dbReference>
<dbReference type="Pfam" id="PF00237">
    <property type="entry name" value="Ribosomal_L22"/>
    <property type="match status" value="1"/>
</dbReference>
<dbReference type="SUPFAM" id="SSF54843">
    <property type="entry name" value="Ribosomal protein L22"/>
    <property type="match status" value="1"/>
</dbReference>
<dbReference type="PROSITE" id="PS00464">
    <property type="entry name" value="RIBOSOMAL_L22"/>
    <property type="match status" value="1"/>
</dbReference>
<name>RL22_MYXXD</name>
<keyword id="KW-1185">Reference proteome</keyword>
<keyword id="KW-0687">Ribonucleoprotein</keyword>
<keyword id="KW-0689">Ribosomal protein</keyword>
<keyword id="KW-0694">RNA-binding</keyword>
<keyword id="KW-0699">rRNA-binding</keyword>
<comment type="function">
    <text evidence="1">This protein binds specifically to 23S rRNA; its binding is stimulated by other ribosomal proteins, e.g. L4, L17, and L20. It is important during the early stages of 50S assembly. It makes multiple contacts with different domains of the 23S rRNA in the assembled 50S subunit and ribosome (By similarity).</text>
</comment>
<comment type="function">
    <text evidence="1">The globular domain of the protein is located near the polypeptide exit tunnel on the outside of the subunit, while an extended beta-hairpin is found that lines the wall of the exit tunnel in the center of the 70S ribosome.</text>
</comment>
<comment type="subunit">
    <text evidence="1">Part of the 50S ribosomal subunit.</text>
</comment>
<comment type="similarity">
    <text evidence="1">Belongs to the universal ribosomal protein uL22 family.</text>
</comment>
<proteinExistence type="inferred from homology"/>
<gene>
    <name evidence="1" type="primary">rplV</name>
    <name type="ordered locus">MXAN_3304</name>
</gene>
<protein>
    <recommendedName>
        <fullName evidence="1">Large ribosomal subunit protein uL22</fullName>
    </recommendedName>
    <alternativeName>
        <fullName evidence="2">50S ribosomal protein L22</fullName>
    </alternativeName>
</protein>
<organism>
    <name type="scientific">Myxococcus xanthus (strain DK1622)</name>
    <dbReference type="NCBI Taxonomy" id="246197"/>
    <lineage>
        <taxon>Bacteria</taxon>
        <taxon>Pseudomonadati</taxon>
        <taxon>Myxococcota</taxon>
        <taxon>Myxococcia</taxon>
        <taxon>Myxococcales</taxon>
        <taxon>Cystobacterineae</taxon>
        <taxon>Myxococcaceae</taxon>
        <taxon>Myxococcus</taxon>
    </lineage>
</organism>
<accession>Q1D770</accession>